<protein>
    <recommendedName>
        <fullName evidence="1">Queuine tRNA-ribosyltransferase</fullName>
        <ecNumber evidence="1">2.4.2.29</ecNumber>
    </recommendedName>
    <alternativeName>
        <fullName evidence="1">Guanine insertion enzyme</fullName>
    </alternativeName>
    <alternativeName>
        <fullName evidence="1">tRNA-guanine transglycosylase</fullName>
    </alternativeName>
</protein>
<organism>
    <name type="scientific">Francisella tularensis subsp. holarctica (strain FTNF002-00 / FTA)</name>
    <dbReference type="NCBI Taxonomy" id="458234"/>
    <lineage>
        <taxon>Bacteria</taxon>
        <taxon>Pseudomonadati</taxon>
        <taxon>Pseudomonadota</taxon>
        <taxon>Gammaproteobacteria</taxon>
        <taxon>Thiotrichales</taxon>
        <taxon>Francisellaceae</taxon>
        <taxon>Francisella</taxon>
    </lineage>
</organism>
<accession>A7NBL6</accession>
<name>TGT_FRATF</name>
<sequence>MTVMKFDLIKKEGKARRGKITFPRGDIQTPAFMPVGTYGAVKSLSPVELKEMGAEIILGNTFHLWLRPGTEIIKKHGSLHGFNGWDKPILTDSGGFQVFSLGKMRKLTEEGVTFKSPVNSSKVFLSPEISMQVQRDLGSDIVMCFDECTPYPATEKEAKESMELSMRWAKRSKEAHGDNPSALFGIIQGGMYEHLRDESLAKLKEIDFDGFAIGGLSVGEPKEDMIRILDHTAHQMPEDKPRYLMGVGTPKDLVEAVYRGVDMFDCVMPSRNARNGHIFTSEGVIKIRNSKYKDDTSPLDPNCDCYTCKNFTKSYLHHLDKTKEILGSRLNTIHNLTFYQNLMKSIRKALDEGRFSEFRKEFLASYK</sequence>
<comment type="function">
    <text evidence="1">Catalyzes the base-exchange of a guanine (G) residue with the queuine precursor 7-aminomethyl-7-deazaguanine (PreQ1) at position 34 (anticodon wobble position) in tRNAs with GU(N) anticodons (tRNA-Asp, -Asn, -His and -Tyr). Catalysis occurs through a double-displacement mechanism. The nucleophile active site attacks the C1' of nucleotide 34 to detach the guanine base from the RNA, forming a covalent enzyme-RNA intermediate. The proton acceptor active site deprotonates the incoming PreQ1, allowing a nucleophilic attack on the C1' of the ribose to form the product. After dissociation, two additional enzymatic reactions on the tRNA convert PreQ1 to queuine (Q), resulting in the hypermodified nucleoside queuosine (7-(((4,5-cis-dihydroxy-2-cyclopenten-1-yl)amino)methyl)-7-deazaguanosine).</text>
</comment>
<comment type="catalytic activity">
    <reaction evidence="1">
        <text>7-aminomethyl-7-carbaguanine + guanosine(34) in tRNA = 7-aminomethyl-7-carbaguanosine(34) in tRNA + guanine</text>
        <dbReference type="Rhea" id="RHEA:24104"/>
        <dbReference type="Rhea" id="RHEA-COMP:10341"/>
        <dbReference type="Rhea" id="RHEA-COMP:10342"/>
        <dbReference type="ChEBI" id="CHEBI:16235"/>
        <dbReference type="ChEBI" id="CHEBI:58703"/>
        <dbReference type="ChEBI" id="CHEBI:74269"/>
        <dbReference type="ChEBI" id="CHEBI:82833"/>
        <dbReference type="EC" id="2.4.2.29"/>
    </reaction>
</comment>
<comment type="cofactor">
    <cofactor evidence="1">
        <name>Zn(2+)</name>
        <dbReference type="ChEBI" id="CHEBI:29105"/>
    </cofactor>
    <text evidence="1">Binds 1 zinc ion per subunit.</text>
</comment>
<comment type="pathway">
    <text evidence="1">tRNA modification; tRNA-queuosine biosynthesis.</text>
</comment>
<comment type="subunit">
    <text evidence="1">Homodimer. Within each dimer, one monomer is responsible for RNA recognition and catalysis, while the other monomer binds to the replacement base PreQ1.</text>
</comment>
<comment type="similarity">
    <text evidence="1">Belongs to the queuine tRNA-ribosyltransferase family.</text>
</comment>
<evidence type="ECO:0000255" key="1">
    <source>
        <dbReference type="HAMAP-Rule" id="MF_00168"/>
    </source>
</evidence>
<feature type="chain" id="PRO_1000016791" description="Queuine tRNA-ribosyltransferase">
    <location>
        <begin position="1"/>
        <end position="367"/>
    </location>
</feature>
<feature type="region of interest" description="RNA binding" evidence="1">
    <location>
        <begin position="246"/>
        <end position="252"/>
    </location>
</feature>
<feature type="active site" description="Proton acceptor" evidence="1">
    <location>
        <position position="92"/>
    </location>
</feature>
<feature type="active site" description="Nucleophile" evidence="1">
    <location>
        <position position="265"/>
    </location>
</feature>
<feature type="binding site" evidence="1">
    <location>
        <begin position="92"/>
        <end position="96"/>
    </location>
    <ligand>
        <name>substrate</name>
    </ligand>
</feature>
<feature type="binding site" evidence="1">
    <location>
        <position position="146"/>
    </location>
    <ligand>
        <name>substrate</name>
    </ligand>
</feature>
<feature type="binding site" evidence="1">
    <location>
        <position position="188"/>
    </location>
    <ligand>
        <name>substrate</name>
    </ligand>
</feature>
<feature type="binding site" evidence="1">
    <location>
        <position position="215"/>
    </location>
    <ligand>
        <name>substrate</name>
    </ligand>
</feature>
<feature type="binding site" evidence="1">
    <location>
        <position position="303"/>
    </location>
    <ligand>
        <name>Zn(2+)</name>
        <dbReference type="ChEBI" id="CHEBI:29105"/>
    </ligand>
</feature>
<feature type="binding site" evidence="1">
    <location>
        <position position="305"/>
    </location>
    <ligand>
        <name>Zn(2+)</name>
        <dbReference type="ChEBI" id="CHEBI:29105"/>
    </ligand>
</feature>
<feature type="binding site" evidence="1">
    <location>
        <position position="308"/>
    </location>
    <ligand>
        <name>Zn(2+)</name>
        <dbReference type="ChEBI" id="CHEBI:29105"/>
    </ligand>
</feature>
<feature type="binding site" evidence="1">
    <location>
        <position position="334"/>
    </location>
    <ligand>
        <name>Zn(2+)</name>
        <dbReference type="ChEBI" id="CHEBI:29105"/>
    </ligand>
</feature>
<gene>
    <name evidence="1" type="primary">tgt</name>
    <name type="ordered locus">FTA_0893</name>
</gene>
<proteinExistence type="inferred from homology"/>
<keyword id="KW-0328">Glycosyltransferase</keyword>
<keyword id="KW-0479">Metal-binding</keyword>
<keyword id="KW-0671">Queuosine biosynthesis</keyword>
<keyword id="KW-0808">Transferase</keyword>
<keyword id="KW-0819">tRNA processing</keyword>
<keyword id="KW-0862">Zinc</keyword>
<dbReference type="EC" id="2.4.2.29" evidence="1"/>
<dbReference type="EMBL" id="CP000803">
    <property type="protein sequence ID" value="ABU61369.1"/>
    <property type="molecule type" value="Genomic_DNA"/>
</dbReference>
<dbReference type="RefSeq" id="WP_003015439.1">
    <property type="nucleotide sequence ID" value="NC_009749.1"/>
</dbReference>
<dbReference type="SMR" id="A7NBL6"/>
<dbReference type="KEGG" id="fta:FTA_0893"/>
<dbReference type="HOGENOM" id="CLU_022060_0_1_6"/>
<dbReference type="UniPathway" id="UPA00392"/>
<dbReference type="GO" id="GO:0005829">
    <property type="term" value="C:cytosol"/>
    <property type="evidence" value="ECO:0007669"/>
    <property type="project" value="TreeGrafter"/>
</dbReference>
<dbReference type="GO" id="GO:0046872">
    <property type="term" value="F:metal ion binding"/>
    <property type="evidence" value="ECO:0007669"/>
    <property type="project" value="UniProtKB-KW"/>
</dbReference>
<dbReference type="GO" id="GO:0008479">
    <property type="term" value="F:tRNA-guanosine(34) queuine transglycosylase activity"/>
    <property type="evidence" value="ECO:0007669"/>
    <property type="project" value="UniProtKB-UniRule"/>
</dbReference>
<dbReference type="GO" id="GO:0008616">
    <property type="term" value="P:queuosine biosynthetic process"/>
    <property type="evidence" value="ECO:0007669"/>
    <property type="project" value="UniProtKB-UniRule"/>
</dbReference>
<dbReference type="GO" id="GO:0002099">
    <property type="term" value="P:tRNA wobble guanine modification"/>
    <property type="evidence" value="ECO:0007669"/>
    <property type="project" value="TreeGrafter"/>
</dbReference>
<dbReference type="GO" id="GO:0101030">
    <property type="term" value="P:tRNA-guanine transglycosylation"/>
    <property type="evidence" value="ECO:0007669"/>
    <property type="project" value="InterPro"/>
</dbReference>
<dbReference type="FunFam" id="3.20.20.105:FF:000001">
    <property type="entry name" value="Queuine tRNA-ribosyltransferase"/>
    <property type="match status" value="1"/>
</dbReference>
<dbReference type="Gene3D" id="3.20.20.105">
    <property type="entry name" value="Queuine tRNA-ribosyltransferase-like"/>
    <property type="match status" value="1"/>
</dbReference>
<dbReference type="HAMAP" id="MF_00168">
    <property type="entry name" value="Q_tRNA_Tgt"/>
    <property type="match status" value="1"/>
</dbReference>
<dbReference type="InterPro" id="IPR050076">
    <property type="entry name" value="ArchSynthase1/Queuine_TRR"/>
</dbReference>
<dbReference type="InterPro" id="IPR004803">
    <property type="entry name" value="TGT"/>
</dbReference>
<dbReference type="InterPro" id="IPR036511">
    <property type="entry name" value="TGT-like_sf"/>
</dbReference>
<dbReference type="InterPro" id="IPR002616">
    <property type="entry name" value="tRNA_ribo_trans-like"/>
</dbReference>
<dbReference type="NCBIfam" id="TIGR00430">
    <property type="entry name" value="Q_tRNA_tgt"/>
    <property type="match status" value="1"/>
</dbReference>
<dbReference type="NCBIfam" id="TIGR00449">
    <property type="entry name" value="tgt_general"/>
    <property type="match status" value="1"/>
</dbReference>
<dbReference type="PANTHER" id="PTHR46499">
    <property type="entry name" value="QUEUINE TRNA-RIBOSYLTRANSFERASE"/>
    <property type="match status" value="1"/>
</dbReference>
<dbReference type="PANTHER" id="PTHR46499:SF1">
    <property type="entry name" value="QUEUINE TRNA-RIBOSYLTRANSFERASE"/>
    <property type="match status" value="1"/>
</dbReference>
<dbReference type="Pfam" id="PF01702">
    <property type="entry name" value="TGT"/>
    <property type="match status" value="1"/>
</dbReference>
<dbReference type="SUPFAM" id="SSF51713">
    <property type="entry name" value="tRNA-guanine transglycosylase"/>
    <property type="match status" value="1"/>
</dbReference>
<reference key="1">
    <citation type="journal article" date="2009" name="PLoS ONE">
        <title>Complete genome sequence of Francisella tularensis subspecies holarctica FTNF002-00.</title>
        <authorList>
            <person name="Barabote R.D."/>
            <person name="Xie G."/>
            <person name="Brettin T.S."/>
            <person name="Hinrichs S.H."/>
            <person name="Fey P.D."/>
            <person name="Jay J.J."/>
            <person name="Engle J.L."/>
            <person name="Godbole S.D."/>
            <person name="Noronha J.M."/>
            <person name="Scheuermann R.H."/>
            <person name="Zhou L.W."/>
            <person name="Lion C."/>
            <person name="Dempsey M.P."/>
        </authorList>
    </citation>
    <scope>NUCLEOTIDE SEQUENCE [LARGE SCALE GENOMIC DNA]</scope>
    <source>
        <strain>FTNF002-00 / FTA</strain>
    </source>
</reference>